<feature type="chain" id="PRO_0000332722" description="Probable ethanolamine kinase B">
    <location>
        <begin position="1"/>
        <end position="447"/>
    </location>
</feature>
<feature type="region of interest" description="Disordered" evidence="2">
    <location>
        <begin position="178"/>
        <end position="217"/>
    </location>
</feature>
<feature type="compositionally biased region" description="Low complexity" evidence="2">
    <location>
        <begin position="178"/>
        <end position="208"/>
    </location>
</feature>
<sequence>MNEFEDIIYPGPSHVTTNIEFEDENIENNENYLNLVQILKELVDNNLKEEIEFKPMVGGVTNTLFKSSFITGQGSNKSVIIRLYGKGSEQFIDRKTEANIQYLLSKNGVGPKFYGTFENGCIYGYVEGDQLQLEDLYQNNILSLIAKETGRWHSLKLDINSNSQLLLSSSSDSSIKESTTISTSTSTSTSTSSTSPSTSPSLENSTLSPRNMNTQTSSTSLFKNLNSWINNAMTLTSKESKGSMISKINLNRYKEEAMSLMSFIEEHYSGEEYINFCHNDLIPRNMIYNKEKGQVKFIDFEYSGYNFRGYDIGNFFCEFSGLDLDYTKYPSIEIQKRFIKNYLISINNCKNIQQKQKQKQQQQQIQNSINDENMDIENDELLYEPSKEEIHNLYIESNHLTLGSHLMWGFWGIIQHFSSSIDFDYIDYAIKRFKQYDLVKNKVLSLK</sequence>
<organism>
    <name type="scientific">Dictyostelium discoideum</name>
    <name type="common">Social amoeba</name>
    <dbReference type="NCBI Taxonomy" id="44689"/>
    <lineage>
        <taxon>Eukaryota</taxon>
        <taxon>Amoebozoa</taxon>
        <taxon>Evosea</taxon>
        <taxon>Eumycetozoa</taxon>
        <taxon>Dictyostelia</taxon>
        <taxon>Dictyosteliales</taxon>
        <taxon>Dictyosteliaceae</taxon>
        <taxon>Dictyostelium</taxon>
    </lineage>
</organism>
<protein>
    <recommendedName>
        <fullName>Probable ethanolamine kinase B</fullName>
        <ecNumber>2.7.1.82</ecNumber>
    </recommendedName>
</protein>
<comment type="function">
    <text evidence="1">Highly specific for ethanolamine phosphorylation. May be a rate-controlling step in phosphatidylethanolamine biosynthesis (By similarity).</text>
</comment>
<comment type="catalytic activity">
    <reaction>
        <text>ethanolamine + ATP = phosphoethanolamine + ADP + H(+)</text>
        <dbReference type="Rhea" id="RHEA:13069"/>
        <dbReference type="ChEBI" id="CHEBI:15378"/>
        <dbReference type="ChEBI" id="CHEBI:30616"/>
        <dbReference type="ChEBI" id="CHEBI:57603"/>
        <dbReference type="ChEBI" id="CHEBI:58190"/>
        <dbReference type="ChEBI" id="CHEBI:456216"/>
        <dbReference type="EC" id="2.7.1.82"/>
    </reaction>
</comment>
<comment type="pathway">
    <text>Phospholipid metabolism; phosphatidylethanolamine biosynthesis; phosphatidylethanolamine from ethanolamine: step 1/3.</text>
</comment>
<comment type="subcellular location">
    <subcellularLocation>
        <location evidence="1">Cytoplasm</location>
    </subcellularLocation>
</comment>
<comment type="similarity">
    <text evidence="3">Belongs to the choline/ethanolamine kinase family.</text>
</comment>
<name>EKIB_DICDI</name>
<dbReference type="EC" id="2.7.1.82"/>
<dbReference type="EMBL" id="AAFI02000013">
    <property type="protein sequence ID" value="EAL69913.1"/>
    <property type="molecule type" value="Genomic_DNA"/>
</dbReference>
<dbReference type="RefSeq" id="XP_643773.1">
    <property type="nucleotide sequence ID" value="XM_638681.1"/>
</dbReference>
<dbReference type="SMR" id="Q554D8"/>
<dbReference type="FunCoup" id="Q554D8">
    <property type="interactions" value="164"/>
</dbReference>
<dbReference type="STRING" id="44689.Q554D8"/>
<dbReference type="PaxDb" id="44689-DDB0267034"/>
<dbReference type="EnsemblProtists" id="EAL69913">
    <property type="protein sequence ID" value="EAL69913"/>
    <property type="gene ID" value="DDB_G0275265"/>
</dbReference>
<dbReference type="GeneID" id="8619818"/>
<dbReference type="KEGG" id="ddi:DDB_G0275265"/>
<dbReference type="dictyBase" id="DDB_G0275265">
    <property type="gene designation" value="etnkB"/>
</dbReference>
<dbReference type="VEuPathDB" id="AmoebaDB:DDB_G0275265"/>
<dbReference type="eggNOG" id="KOG2686">
    <property type="taxonomic scope" value="Eukaryota"/>
</dbReference>
<dbReference type="HOGENOM" id="CLU_012712_1_0_1"/>
<dbReference type="InParanoid" id="Q554D8"/>
<dbReference type="OMA" id="IETSIDY"/>
<dbReference type="PhylomeDB" id="Q554D8"/>
<dbReference type="Reactome" id="R-DDI-1483213">
    <property type="pathway name" value="Synthesis of PE"/>
</dbReference>
<dbReference type="UniPathway" id="UPA00558">
    <property type="reaction ID" value="UER00741"/>
</dbReference>
<dbReference type="PRO" id="PR:Q554D8"/>
<dbReference type="Proteomes" id="UP000002195">
    <property type="component" value="Chromosome 2"/>
</dbReference>
<dbReference type="GO" id="GO:0005737">
    <property type="term" value="C:cytoplasm"/>
    <property type="evidence" value="ECO:0000318"/>
    <property type="project" value="GO_Central"/>
</dbReference>
<dbReference type="GO" id="GO:0005524">
    <property type="term" value="F:ATP binding"/>
    <property type="evidence" value="ECO:0007669"/>
    <property type="project" value="UniProtKB-KW"/>
</dbReference>
<dbReference type="GO" id="GO:0004305">
    <property type="term" value="F:ethanolamine kinase activity"/>
    <property type="evidence" value="ECO:0000318"/>
    <property type="project" value="GO_Central"/>
</dbReference>
<dbReference type="GO" id="GO:0006646">
    <property type="term" value="P:phosphatidylethanolamine biosynthetic process"/>
    <property type="evidence" value="ECO:0000318"/>
    <property type="project" value="GO_Central"/>
</dbReference>
<dbReference type="CDD" id="cd05157">
    <property type="entry name" value="ETNK_euk"/>
    <property type="match status" value="1"/>
</dbReference>
<dbReference type="Gene3D" id="3.90.1200.10">
    <property type="match status" value="1"/>
</dbReference>
<dbReference type="Gene3D" id="3.30.200.20">
    <property type="entry name" value="Phosphorylase Kinase, domain 1"/>
    <property type="match status" value="1"/>
</dbReference>
<dbReference type="InterPro" id="IPR011009">
    <property type="entry name" value="Kinase-like_dom_sf"/>
</dbReference>
<dbReference type="PANTHER" id="PTHR22603">
    <property type="entry name" value="CHOLINE/ETHANOALAMINE KINASE"/>
    <property type="match status" value="1"/>
</dbReference>
<dbReference type="PANTHER" id="PTHR22603:SF66">
    <property type="entry name" value="ETHANOLAMINE KINASE"/>
    <property type="match status" value="1"/>
</dbReference>
<dbReference type="Pfam" id="PF01633">
    <property type="entry name" value="Choline_kinase"/>
    <property type="match status" value="1"/>
</dbReference>
<dbReference type="SUPFAM" id="SSF56112">
    <property type="entry name" value="Protein kinase-like (PK-like)"/>
    <property type="match status" value="1"/>
</dbReference>
<reference key="1">
    <citation type="journal article" date="2002" name="Nature">
        <title>Sequence and analysis of chromosome 2 of Dictyostelium discoideum.</title>
        <authorList>
            <person name="Gloeckner G."/>
            <person name="Eichinger L."/>
            <person name="Szafranski K."/>
            <person name="Pachebat J.A."/>
            <person name="Bankier A.T."/>
            <person name="Dear P.H."/>
            <person name="Lehmann R."/>
            <person name="Baumgart C."/>
            <person name="Parra G."/>
            <person name="Abril J.F."/>
            <person name="Guigo R."/>
            <person name="Kumpf K."/>
            <person name="Tunggal B."/>
            <person name="Cox E.C."/>
            <person name="Quail M.A."/>
            <person name="Platzer M."/>
            <person name="Rosenthal A."/>
            <person name="Noegel A.A."/>
        </authorList>
    </citation>
    <scope>NUCLEOTIDE SEQUENCE [LARGE SCALE GENOMIC DNA]</scope>
    <source>
        <strain>AX4</strain>
    </source>
</reference>
<reference key="2">
    <citation type="journal article" date="2005" name="Nature">
        <title>The genome of the social amoeba Dictyostelium discoideum.</title>
        <authorList>
            <person name="Eichinger L."/>
            <person name="Pachebat J.A."/>
            <person name="Gloeckner G."/>
            <person name="Rajandream M.A."/>
            <person name="Sucgang R."/>
            <person name="Berriman M."/>
            <person name="Song J."/>
            <person name="Olsen R."/>
            <person name="Szafranski K."/>
            <person name="Xu Q."/>
            <person name="Tunggal B."/>
            <person name="Kummerfeld S."/>
            <person name="Madera M."/>
            <person name="Konfortov B.A."/>
            <person name="Rivero F."/>
            <person name="Bankier A.T."/>
            <person name="Lehmann R."/>
            <person name="Hamlin N."/>
            <person name="Davies R."/>
            <person name="Gaudet P."/>
            <person name="Fey P."/>
            <person name="Pilcher K."/>
            <person name="Chen G."/>
            <person name="Saunders D."/>
            <person name="Sodergren E.J."/>
            <person name="Davis P."/>
            <person name="Kerhornou A."/>
            <person name="Nie X."/>
            <person name="Hall N."/>
            <person name="Anjard C."/>
            <person name="Hemphill L."/>
            <person name="Bason N."/>
            <person name="Farbrother P."/>
            <person name="Desany B."/>
            <person name="Just E."/>
            <person name="Morio T."/>
            <person name="Rost R."/>
            <person name="Churcher C.M."/>
            <person name="Cooper J."/>
            <person name="Haydock S."/>
            <person name="van Driessche N."/>
            <person name="Cronin A."/>
            <person name="Goodhead I."/>
            <person name="Muzny D.M."/>
            <person name="Mourier T."/>
            <person name="Pain A."/>
            <person name="Lu M."/>
            <person name="Harper D."/>
            <person name="Lindsay R."/>
            <person name="Hauser H."/>
            <person name="James K.D."/>
            <person name="Quiles M."/>
            <person name="Madan Babu M."/>
            <person name="Saito T."/>
            <person name="Buchrieser C."/>
            <person name="Wardroper A."/>
            <person name="Felder M."/>
            <person name="Thangavelu M."/>
            <person name="Johnson D."/>
            <person name="Knights A."/>
            <person name="Loulseged H."/>
            <person name="Mungall K.L."/>
            <person name="Oliver K."/>
            <person name="Price C."/>
            <person name="Quail M.A."/>
            <person name="Urushihara H."/>
            <person name="Hernandez J."/>
            <person name="Rabbinowitsch E."/>
            <person name="Steffen D."/>
            <person name="Sanders M."/>
            <person name="Ma J."/>
            <person name="Kohara Y."/>
            <person name="Sharp S."/>
            <person name="Simmonds M.N."/>
            <person name="Spiegler S."/>
            <person name="Tivey A."/>
            <person name="Sugano S."/>
            <person name="White B."/>
            <person name="Walker D."/>
            <person name="Woodward J.R."/>
            <person name="Winckler T."/>
            <person name="Tanaka Y."/>
            <person name="Shaulsky G."/>
            <person name="Schleicher M."/>
            <person name="Weinstock G.M."/>
            <person name="Rosenthal A."/>
            <person name="Cox E.C."/>
            <person name="Chisholm R.L."/>
            <person name="Gibbs R.A."/>
            <person name="Loomis W.F."/>
            <person name="Platzer M."/>
            <person name="Kay R.R."/>
            <person name="Williams J.G."/>
            <person name="Dear P.H."/>
            <person name="Noegel A.A."/>
            <person name="Barrell B.G."/>
            <person name="Kuspa A."/>
        </authorList>
    </citation>
    <scope>NUCLEOTIDE SEQUENCE [LARGE SCALE GENOMIC DNA]</scope>
    <source>
        <strain>AX4</strain>
    </source>
</reference>
<gene>
    <name type="primary">etnkB</name>
    <name type="ORF">DDB_G0275265</name>
</gene>
<accession>Q554D8</accession>
<accession>Q869W4</accession>
<keyword id="KW-0067">ATP-binding</keyword>
<keyword id="KW-0963">Cytoplasm</keyword>
<keyword id="KW-0418">Kinase</keyword>
<keyword id="KW-0444">Lipid biosynthesis</keyword>
<keyword id="KW-0443">Lipid metabolism</keyword>
<keyword id="KW-0547">Nucleotide-binding</keyword>
<keyword id="KW-0594">Phospholipid biosynthesis</keyword>
<keyword id="KW-1208">Phospholipid metabolism</keyword>
<keyword id="KW-1185">Reference proteome</keyword>
<keyword id="KW-0808">Transferase</keyword>
<proteinExistence type="inferred from homology"/>
<evidence type="ECO:0000250" key="1"/>
<evidence type="ECO:0000256" key="2">
    <source>
        <dbReference type="SAM" id="MobiDB-lite"/>
    </source>
</evidence>
<evidence type="ECO:0000305" key="3"/>